<name>RL17_MYCBO</name>
<organism>
    <name type="scientific">Mycobacterium bovis (strain ATCC BAA-935 / AF2122/97)</name>
    <dbReference type="NCBI Taxonomy" id="233413"/>
    <lineage>
        <taxon>Bacteria</taxon>
        <taxon>Bacillati</taxon>
        <taxon>Actinomycetota</taxon>
        <taxon>Actinomycetes</taxon>
        <taxon>Mycobacteriales</taxon>
        <taxon>Mycobacteriaceae</taxon>
        <taxon>Mycobacterium</taxon>
        <taxon>Mycobacterium tuberculosis complex</taxon>
    </lineage>
</organism>
<comment type="subunit">
    <text evidence="1">Part of the 50S ribosomal subunit. Contacts protein L32.</text>
</comment>
<comment type="similarity">
    <text evidence="1">Belongs to the bacterial ribosomal protein bL17 family.</text>
</comment>
<sequence>MPKPTKGPRLGGSSSHQKAILANLATSLFEHGRITTTEPKARALRPYAEKLITHAKKGALHNRREVLKKLRDKDVVHTLFAEIGPFFADRDGGYTRIIKIEARKGDNAPMAVIELVREKTVTSEANRARRVAAAQAKAKKAAAMPTEESEAKPAEEGDVVGASEPDAKAPEEPPAEAPEN</sequence>
<keyword id="KW-1185">Reference proteome</keyword>
<keyword id="KW-0687">Ribonucleoprotein</keyword>
<keyword id="KW-0689">Ribosomal protein</keyword>
<evidence type="ECO:0000255" key="1">
    <source>
        <dbReference type="HAMAP-Rule" id="MF_01368"/>
    </source>
</evidence>
<evidence type="ECO:0000256" key="2">
    <source>
        <dbReference type="SAM" id="MobiDB-lite"/>
    </source>
</evidence>
<evidence type="ECO:0000305" key="3"/>
<feature type="chain" id="PRO_0000175537" description="Large ribosomal subunit protein bL17">
    <location>
        <begin position="1"/>
        <end position="180"/>
    </location>
</feature>
<feature type="region of interest" description="Disordered" evidence="2">
    <location>
        <begin position="134"/>
        <end position="180"/>
    </location>
</feature>
<proteinExistence type="inferred from homology"/>
<protein>
    <recommendedName>
        <fullName evidence="1">Large ribosomal subunit protein bL17</fullName>
    </recommendedName>
    <alternativeName>
        <fullName evidence="3">50S ribosomal protein L17</fullName>
    </alternativeName>
</protein>
<reference key="1">
    <citation type="journal article" date="2003" name="Proc. Natl. Acad. Sci. U.S.A.">
        <title>The complete genome sequence of Mycobacterium bovis.</title>
        <authorList>
            <person name="Garnier T."/>
            <person name="Eiglmeier K."/>
            <person name="Camus J.-C."/>
            <person name="Medina N."/>
            <person name="Mansoor H."/>
            <person name="Pryor M."/>
            <person name="Duthoy S."/>
            <person name="Grondin S."/>
            <person name="Lacroix C."/>
            <person name="Monsempe C."/>
            <person name="Simon S."/>
            <person name="Harris B."/>
            <person name="Atkin R."/>
            <person name="Doggett J."/>
            <person name="Mayes R."/>
            <person name="Keating L."/>
            <person name="Wheeler P.R."/>
            <person name="Parkhill J."/>
            <person name="Barrell B.G."/>
            <person name="Cole S.T."/>
            <person name="Gordon S.V."/>
            <person name="Hewinson R.G."/>
        </authorList>
    </citation>
    <scope>NUCLEOTIDE SEQUENCE [LARGE SCALE GENOMIC DNA]</scope>
    <source>
        <strain>ATCC BAA-935 / AF2122/97</strain>
    </source>
</reference>
<reference key="2">
    <citation type="journal article" date="2017" name="Genome Announc.">
        <title>Updated reference genome sequence and annotation of Mycobacterium bovis AF2122/97.</title>
        <authorList>
            <person name="Malone K.M."/>
            <person name="Farrell D."/>
            <person name="Stuber T.P."/>
            <person name="Schubert O.T."/>
            <person name="Aebersold R."/>
            <person name="Robbe-Austerman S."/>
            <person name="Gordon S.V."/>
        </authorList>
    </citation>
    <scope>NUCLEOTIDE SEQUENCE [LARGE SCALE GENOMIC DNA]</scope>
    <scope>GENOME REANNOTATION</scope>
    <source>
        <strain>ATCC BAA-935 / AF2122/97</strain>
    </source>
</reference>
<gene>
    <name evidence="1" type="primary">rplQ</name>
    <name type="ordered locus">BQ2027_MB3485C</name>
</gene>
<dbReference type="EMBL" id="LT708304">
    <property type="protein sequence ID" value="SIU02113.1"/>
    <property type="molecule type" value="Genomic_DNA"/>
</dbReference>
<dbReference type="RefSeq" id="NP_857125.1">
    <property type="nucleotide sequence ID" value="NC_002945.3"/>
</dbReference>
<dbReference type="RefSeq" id="WP_003418346.1">
    <property type="nucleotide sequence ID" value="NC_002945.4"/>
</dbReference>
<dbReference type="SMR" id="P0A5V5"/>
<dbReference type="GeneID" id="45427445"/>
<dbReference type="KEGG" id="mbo:BQ2027_MB3485C"/>
<dbReference type="PATRIC" id="fig|233413.5.peg.3822"/>
<dbReference type="Proteomes" id="UP000001419">
    <property type="component" value="Chromosome"/>
</dbReference>
<dbReference type="GO" id="GO:0022625">
    <property type="term" value="C:cytosolic large ribosomal subunit"/>
    <property type="evidence" value="ECO:0007669"/>
    <property type="project" value="TreeGrafter"/>
</dbReference>
<dbReference type="GO" id="GO:0003735">
    <property type="term" value="F:structural constituent of ribosome"/>
    <property type="evidence" value="ECO:0007669"/>
    <property type="project" value="InterPro"/>
</dbReference>
<dbReference type="GO" id="GO:0006412">
    <property type="term" value="P:translation"/>
    <property type="evidence" value="ECO:0007669"/>
    <property type="project" value="UniProtKB-UniRule"/>
</dbReference>
<dbReference type="FunFam" id="3.90.1030.10:FF:000001">
    <property type="entry name" value="50S ribosomal protein L17"/>
    <property type="match status" value="1"/>
</dbReference>
<dbReference type="Gene3D" id="3.90.1030.10">
    <property type="entry name" value="Ribosomal protein L17"/>
    <property type="match status" value="1"/>
</dbReference>
<dbReference type="HAMAP" id="MF_01368">
    <property type="entry name" value="Ribosomal_bL17"/>
    <property type="match status" value="1"/>
</dbReference>
<dbReference type="InterPro" id="IPR000456">
    <property type="entry name" value="Ribosomal_bL17"/>
</dbReference>
<dbReference type="InterPro" id="IPR047859">
    <property type="entry name" value="Ribosomal_bL17_CS"/>
</dbReference>
<dbReference type="InterPro" id="IPR036373">
    <property type="entry name" value="Ribosomal_bL17_sf"/>
</dbReference>
<dbReference type="NCBIfam" id="TIGR00059">
    <property type="entry name" value="L17"/>
    <property type="match status" value="1"/>
</dbReference>
<dbReference type="PANTHER" id="PTHR14413:SF16">
    <property type="entry name" value="LARGE RIBOSOMAL SUBUNIT PROTEIN BL17M"/>
    <property type="match status" value="1"/>
</dbReference>
<dbReference type="PANTHER" id="PTHR14413">
    <property type="entry name" value="RIBOSOMAL PROTEIN L17"/>
    <property type="match status" value="1"/>
</dbReference>
<dbReference type="Pfam" id="PF01196">
    <property type="entry name" value="Ribosomal_L17"/>
    <property type="match status" value="1"/>
</dbReference>
<dbReference type="SUPFAM" id="SSF64263">
    <property type="entry name" value="Prokaryotic ribosomal protein L17"/>
    <property type="match status" value="1"/>
</dbReference>
<dbReference type="PROSITE" id="PS01167">
    <property type="entry name" value="RIBOSOMAL_L17"/>
    <property type="match status" value="1"/>
</dbReference>
<accession>P0A5V5</accession>
<accession>A0A1R3Y475</accession>
<accession>O06323</accession>
<accession>X2BPN0</accession>